<sequence>MLRSSLNQNLAKRCLSTANNNGATLIKKRHPIRNFILKTALGATVFYAGGVALSEYNEKFAEYFRTYVPLGDDLVHNYEVYRYGPDSKLGEGISVVGLREMIQEVVYRNPTKFHPEGGEIEIIQEVVPPTRLLTLELITVDDERMDPKFSSLVKDLNSTIETIINQNIYLTDSQIGYILECYSTLTAAVTEYNQQLQNNMNLIIKEKTTKAVNELNSEYEKKFTDKESELTGKFIQDFNNFKDQLEQKKANELNTELRANEQTLLAKHANEVALLSITQVEEFTKIIKEKVDKERDGRLGQLQELDASVTSLSKSVDKMNNALMKNEVITQMITLLSSMKQKLNEAGTTNEGLSLEKEIDRIKLLSSIVPLATSSCKCSSKCKSNCKCSKSCGRKKTLMSVGISELDNAASGKLILSNEQLYNRWNLLEGDFKAASLLPANPGILGHFTAKMFSLLLFTKRGVSVDGTDLDSVYAKVSENIRLSKLDKALADVVSLKGWPHVVCQGWIDDAKRKLEVEALIDVLDSEVRAL</sequence>
<accession>A7TSS9</accession>
<reference key="1">
    <citation type="journal article" date="2007" name="Proc. Natl. Acad. Sci. U.S.A.">
        <title>Independent sorting-out of thousands of duplicated gene pairs in two yeast species descended from a whole-genome duplication.</title>
        <authorList>
            <person name="Scannell D.R."/>
            <person name="Frank A.C."/>
            <person name="Conant G.C."/>
            <person name="Byrne K.P."/>
            <person name="Woolfit M."/>
            <person name="Wolfe K.H."/>
        </authorList>
    </citation>
    <scope>NUCLEOTIDE SEQUENCE [LARGE SCALE GENOMIC DNA]</scope>
    <source>
        <strain>ATCC 22028 / DSM 70294 / BCRC 21397 / CBS 2163 / NBRC 10782 / NRRL Y-8283 / UCD 57-17</strain>
    </source>
</reference>
<comment type="function">
    <text evidence="1">Component of the MICOS complex, a large protein complex of the mitochondrial inner membrane that plays crucial roles in the maintenance of crista junctions, inner membrane architecture, and formation of contact sites to the outer membrane. Plays a role in keeping cristae membranes connected to the inner boundary membrane. Also promotes protein import via the mitochondrial intermembrane space assembly (MIA) pathway (By similarity).</text>
</comment>
<comment type="subunit">
    <text evidence="1">Component of the mitochondrial contact site and cristae organizing system (MICOS) complex.</text>
</comment>
<comment type="subcellular location">
    <subcellularLocation>
        <location evidence="1">Mitochondrion inner membrane</location>
        <topology evidence="1">Single-pass membrane protein</topology>
    </subcellularLocation>
</comment>
<comment type="similarity">
    <text evidence="3">Belongs to the MICOS complex subunit Mic60 family.</text>
</comment>
<evidence type="ECO:0000250" key="1"/>
<evidence type="ECO:0000255" key="2"/>
<evidence type="ECO:0000305" key="3"/>
<gene>
    <name type="primary">MIC60</name>
    <name type="ORF">Kpol_282p3</name>
</gene>
<keyword id="KW-0175">Coiled coil</keyword>
<keyword id="KW-0472">Membrane</keyword>
<keyword id="KW-0496">Mitochondrion</keyword>
<keyword id="KW-0999">Mitochondrion inner membrane</keyword>
<keyword id="KW-1185">Reference proteome</keyword>
<keyword id="KW-0809">Transit peptide</keyword>
<keyword id="KW-0812">Transmembrane</keyword>
<keyword id="KW-1133">Transmembrane helix</keyword>
<protein>
    <recommendedName>
        <fullName>MICOS complex subunit MIC60</fullName>
    </recommendedName>
    <alternativeName>
        <fullName>Mitofilin</fullName>
    </alternativeName>
</protein>
<proteinExistence type="inferred from homology"/>
<organism>
    <name type="scientific">Vanderwaltozyma polyspora (strain ATCC 22028 / DSM 70294 / BCRC 21397 / CBS 2163 / NBRC 10782 / NRRL Y-8283 / UCD 57-17)</name>
    <name type="common">Kluyveromyces polysporus</name>
    <dbReference type="NCBI Taxonomy" id="436907"/>
    <lineage>
        <taxon>Eukaryota</taxon>
        <taxon>Fungi</taxon>
        <taxon>Dikarya</taxon>
        <taxon>Ascomycota</taxon>
        <taxon>Saccharomycotina</taxon>
        <taxon>Saccharomycetes</taxon>
        <taxon>Saccharomycetales</taxon>
        <taxon>Saccharomycetaceae</taxon>
        <taxon>Vanderwaltozyma</taxon>
    </lineage>
</organism>
<feature type="transit peptide" description="Mitochondrion" evidence="2">
    <location>
        <begin position="1"/>
        <end position="15"/>
    </location>
</feature>
<feature type="chain" id="PRO_0000406678" description="MICOS complex subunit MIC60">
    <location>
        <begin position="16"/>
        <end position="531"/>
    </location>
</feature>
<feature type="topological domain" description="Mitochondrial matrix" evidence="2">
    <location>
        <begin position="16"/>
        <end position="34"/>
    </location>
</feature>
<feature type="transmembrane region" description="Helical" evidence="2">
    <location>
        <begin position="35"/>
        <end position="53"/>
    </location>
</feature>
<feature type="topological domain" description="Mitochondrial intermembrane" evidence="2">
    <location>
        <begin position="54"/>
        <end position="531"/>
    </location>
</feature>
<feature type="coiled-coil region" evidence="2">
    <location>
        <begin position="210"/>
        <end position="267"/>
    </location>
</feature>
<name>MIC60_VANPO</name>
<dbReference type="EMBL" id="DS480523">
    <property type="protein sequence ID" value="EDO14676.1"/>
    <property type="molecule type" value="Genomic_DNA"/>
</dbReference>
<dbReference type="RefSeq" id="XP_001642534.1">
    <property type="nucleotide sequence ID" value="XM_001642484.1"/>
</dbReference>
<dbReference type="SMR" id="A7TSS9"/>
<dbReference type="FunCoup" id="A7TSS9">
    <property type="interactions" value="230"/>
</dbReference>
<dbReference type="STRING" id="436907.A7TSS9"/>
<dbReference type="GeneID" id="5542704"/>
<dbReference type="KEGG" id="vpo:Kpol_282p3"/>
<dbReference type="eggNOG" id="KOG1854">
    <property type="taxonomic scope" value="Eukaryota"/>
</dbReference>
<dbReference type="HOGENOM" id="CLU_008024_2_0_1"/>
<dbReference type="InParanoid" id="A7TSS9"/>
<dbReference type="OMA" id="DYATDAY"/>
<dbReference type="OrthoDB" id="10261039at2759"/>
<dbReference type="PhylomeDB" id="A7TSS9"/>
<dbReference type="Proteomes" id="UP000000267">
    <property type="component" value="Unassembled WGS sequence"/>
</dbReference>
<dbReference type="GO" id="GO:0061617">
    <property type="term" value="C:MICOS complex"/>
    <property type="evidence" value="ECO:0007669"/>
    <property type="project" value="EnsemblFungi"/>
</dbReference>
<dbReference type="GO" id="GO:0030061">
    <property type="term" value="C:mitochondrial crista"/>
    <property type="evidence" value="ECO:0007669"/>
    <property type="project" value="EnsemblFungi"/>
</dbReference>
<dbReference type="GO" id="GO:0044284">
    <property type="term" value="C:mitochondrial crista junction"/>
    <property type="evidence" value="ECO:0007669"/>
    <property type="project" value="EnsemblFungi"/>
</dbReference>
<dbReference type="GO" id="GO:0042407">
    <property type="term" value="P:cristae formation"/>
    <property type="evidence" value="ECO:0007669"/>
    <property type="project" value="EnsemblFungi"/>
</dbReference>
<dbReference type="GO" id="GO:0045041">
    <property type="term" value="P:protein import into mitochondrial intermembrane space"/>
    <property type="evidence" value="ECO:0007669"/>
    <property type="project" value="EnsemblFungi"/>
</dbReference>
<dbReference type="InterPro" id="IPR019133">
    <property type="entry name" value="MIC60"/>
</dbReference>
<dbReference type="PANTHER" id="PTHR15415:SF7">
    <property type="entry name" value="MICOS COMPLEX SUBUNIT MIC60"/>
    <property type="match status" value="1"/>
</dbReference>
<dbReference type="PANTHER" id="PTHR15415">
    <property type="entry name" value="MITOFILIN"/>
    <property type="match status" value="1"/>
</dbReference>
<dbReference type="Pfam" id="PF09731">
    <property type="entry name" value="Mitofilin"/>
    <property type="match status" value="1"/>
</dbReference>